<protein>
    <recommendedName>
        <fullName>UPF0154 protein MG335.1</fullName>
    </recommendedName>
</protein>
<organism>
    <name type="scientific">Mycoplasma genitalium (strain ATCC 33530 / DSM 19775 / NCTC 10195 / G37)</name>
    <name type="common">Mycoplasmoides genitalium</name>
    <dbReference type="NCBI Taxonomy" id="243273"/>
    <lineage>
        <taxon>Bacteria</taxon>
        <taxon>Bacillati</taxon>
        <taxon>Mycoplasmatota</taxon>
        <taxon>Mycoplasmoidales</taxon>
        <taxon>Mycoplasmoidaceae</taxon>
        <taxon>Mycoplasmoides</taxon>
    </lineage>
</organism>
<keyword id="KW-0472">Membrane</keyword>
<keyword id="KW-1185">Reference proteome</keyword>
<keyword id="KW-0812">Transmembrane</keyword>
<keyword id="KW-1133">Transmembrane helix</keyword>
<accession>Q49310</accession>
<sequence>MNDLALALGLGIPLSLLVGMILGYFISIKIFKKQMRDNPPITENQIKAMYAKMGRKLSETQVKEIMRSIKNQK</sequence>
<reference key="1">
    <citation type="journal article" date="1995" name="Science">
        <title>The minimal gene complement of Mycoplasma genitalium.</title>
        <authorList>
            <person name="Fraser C.M."/>
            <person name="Gocayne J.D."/>
            <person name="White O."/>
            <person name="Adams M.D."/>
            <person name="Clayton R.A."/>
            <person name="Fleischmann R.D."/>
            <person name="Bult C.J."/>
            <person name="Kerlavage A.R."/>
            <person name="Sutton G.G."/>
            <person name="Kelley J.M."/>
            <person name="Fritchman J.L."/>
            <person name="Weidman J.F."/>
            <person name="Small K.V."/>
            <person name="Sandusky M."/>
            <person name="Fuhrmann J.L."/>
            <person name="Nguyen D.T."/>
            <person name="Utterback T.R."/>
            <person name="Saudek D.M."/>
            <person name="Phillips C.A."/>
            <person name="Merrick J.M."/>
            <person name="Tomb J.-F."/>
            <person name="Dougherty B.A."/>
            <person name="Bott K.F."/>
            <person name="Hu P.-C."/>
            <person name="Lucier T.S."/>
            <person name="Peterson S.N."/>
            <person name="Smith H.O."/>
            <person name="Hutchison C.A. III"/>
            <person name="Venter J.C."/>
        </authorList>
    </citation>
    <scope>NUCLEOTIDE SEQUENCE [LARGE SCALE GENOMIC DNA]</scope>
    <source>
        <strain>ATCC 33530 / DSM 19775 / NCTC 10195 / G37</strain>
    </source>
</reference>
<reference key="2">
    <citation type="journal article" date="1993" name="J. Bacteriol.">
        <title>A survey of the Mycoplasma genitalium genome by using random sequencing.</title>
        <authorList>
            <person name="Peterson S.N."/>
            <person name="Hu P.-C."/>
            <person name="Bott K.F."/>
            <person name="Hutchison C.A. III"/>
        </authorList>
    </citation>
    <scope>NUCLEOTIDE SEQUENCE [GENOMIC DNA] OF 11-73</scope>
    <source>
        <strain>ATCC 33530 / DSM 19775 / NCTC 10195 / G37</strain>
    </source>
</reference>
<feature type="chain" id="PRO_0000214968" description="UPF0154 protein MG335.1">
    <location>
        <begin position="1"/>
        <end position="73"/>
    </location>
</feature>
<feature type="transmembrane region" description="Helical" evidence="1">
    <location>
        <begin position="6"/>
        <end position="26"/>
    </location>
</feature>
<comment type="subcellular location">
    <subcellularLocation>
        <location evidence="2">Membrane</location>
        <topology evidence="2">Single-pass membrane protein</topology>
    </subcellularLocation>
</comment>
<comment type="similarity">
    <text evidence="2">Belongs to the UPF0154 family.</text>
</comment>
<name>Y335A_MYCGE</name>
<proteinExistence type="inferred from homology"/>
<gene>
    <name type="ordered locus">MG335.1</name>
</gene>
<evidence type="ECO:0000255" key="1"/>
<evidence type="ECO:0000305" key="2"/>
<dbReference type="EMBL" id="L43967">
    <property type="protein sequence ID" value="AAC71560.1"/>
    <property type="molecule type" value="Genomic_DNA"/>
</dbReference>
<dbReference type="EMBL" id="U02190">
    <property type="protein sequence ID" value="AAD12474.1"/>
    <property type="molecule type" value="Genomic_DNA"/>
</dbReference>
<dbReference type="RefSeq" id="WP_009885966.1">
    <property type="nucleotide sequence ID" value="NC_000908.2"/>
</dbReference>
<dbReference type="SMR" id="Q49310"/>
<dbReference type="FunCoup" id="Q49310">
    <property type="interactions" value="3"/>
</dbReference>
<dbReference type="STRING" id="243273.MG_516"/>
<dbReference type="GeneID" id="88282509"/>
<dbReference type="KEGG" id="mge:MG_516"/>
<dbReference type="eggNOG" id="COG3763">
    <property type="taxonomic scope" value="Bacteria"/>
</dbReference>
<dbReference type="HOGENOM" id="CLU_180108_1_0_14"/>
<dbReference type="InParanoid" id="Q49310"/>
<dbReference type="BioCyc" id="MGEN243273:G1GJ2-418-MONOMER"/>
<dbReference type="Proteomes" id="UP000000807">
    <property type="component" value="Chromosome"/>
</dbReference>
<dbReference type="GO" id="GO:0016020">
    <property type="term" value="C:membrane"/>
    <property type="evidence" value="ECO:0007669"/>
    <property type="project" value="UniProtKB-SubCell"/>
</dbReference>
<dbReference type="HAMAP" id="MF_00363">
    <property type="entry name" value="UPF0154"/>
    <property type="match status" value="1"/>
</dbReference>
<dbReference type="InterPro" id="IPR005359">
    <property type="entry name" value="UPF0154"/>
</dbReference>
<dbReference type="Pfam" id="PF03672">
    <property type="entry name" value="UPF0154"/>
    <property type="match status" value="1"/>
</dbReference>